<accession>Q92172</accession>
<accession>Q788X3</accession>
<accession>Q92057</accession>
<sequence>MPGRAAHQEAAAAGGAAAEPTAAGGSAGAVAQQPEQQGLAGAFPLVLKKLMENPPRDARLDKEKKIKLEEDEAAAASTMAVSASLMPPIWDKTIPYDGESFHLEYMDLDEFLLENGIPSSPTHLDLNQNPLMPVAKLEEKEPASASTGSPVSSSSTAVYQQSEAASSTESPPQNERNTPSPIDPDCVEVEVNFNPDPADLVLSSVPGGELFNPRKHKFTEEDLKPQPMIKKAKKVFVPDEQKDEKYWTRRKKNNVAAKRSRDARRLKENQITIRAAFLEKENTALRTEVAELRKEVGRCKNIVSKYETRYGPFDLSDSE</sequence>
<evidence type="ECO:0000255" key="1">
    <source>
        <dbReference type="PROSITE-ProRule" id="PRU00978"/>
    </source>
</evidence>
<evidence type="ECO:0000256" key="2">
    <source>
        <dbReference type="SAM" id="MobiDB-lite"/>
    </source>
</evidence>
<evidence type="ECO:0000269" key="3">
    <source>
    </source>
</evidence>
<evidence type="ECO:0000269" key="4">
    <source>
    </source>
</evidence>
<evidence type="ECO:0000303" key="5">
    <source>
    </source>
</evidence>
<evidence type="ECO:0000303" key="6">
    <source>
    </source>
</evidence>
<evidence type="ECO:0000305" key="7"/>
<gene>
    <name type="primary">TEF</name>
    <name type="synonym">VBP</name>
</gene>
<organism>
    <name type="scientific">Gallus gallus</name>
    <name type="common">Chicken</name>
    <dbReference type="NCBI Taxonomy" id="9031"/>
    <lineage>
        <taxon>Eukaryota</taxon>
        <taxon>Metazoa</taxon>
        <taxon>Chordata</taxon>
        <taxon>Craniata</taxon>
        <taxon>Vertebrata</taxon>
        <taxon>Euteleostomi</taxon>
        <taxon>Archelosauria</taxon>
        <taxon>Archosauria</taxon>
        <taxon>Dinosauria</taxon>
        <taxon>Saurischia</taxon>
        <taxon>Theropoda</taxon>
        <taxon>Coelurosauria</taxon>
        <taxon>Aves</taxon>
        <taxon>Neognathae</taxon>
        <taxon>Galloanserae</taxon>
        <taxon>Galliformes</taxon>
        <taxon>Phasianidae</taxon>
        <taxon>Phasianinae</taxon>
        <taxon>Gallus</taxon>
    </lineage>
</organism>
<keyword id="KW-0010">Activator</keyword>
<keyword id="KW-0877">Alternative promoter usage</keyword>
<keyword id="KW-0025">Alternative splicing</keyword>
<keyword id="KW-0238">DNA-binding</keyword>
<keyword id="KW-0539">Nucleus</keyword>
<keyword id="KW-1185">Reference proteome</keyword>
<keyword id="KW-0804">Transcription</keyword>
<keyword id="KW-0805">Transcription regulation</keyword>
<proteinExistence type="evidence at protein level"/>
<name>TEF_CHICK</name>
<reference key="1">
    <citation type="journal article" date="1994" name="Nucleic Acids Res.">
        <title>Alternative promoter usage and splicing options result in the differential expression of mRNAs encoding four isoforms of chicken VBP, a member of the PAR subfamily of bZIP transcription factors.</title>
        <authorList>
            <person name="Burch J.B.E."/>
            <person name="Davis D.L."/>
        </authorList>
    </citation>
    <scope>NUCLEOTIDE SEQUENCE [MRNA] (ISOFORM 2)</scope>
    <scope>NUCLEOTIDE SEQUENCE [GENOMIC DNA] OF 1-60</scope>
    <scope>ALTERNATIVE PROMOTER USAGE</scope>
    <scope>FUNCTION</scope>
    <scope>TISSUE SPECIFICITY</scope>
    <source>
        <strain>White leghorn</strain>
        <tissue>Embryonic fibroblast</tissue>
    </source>
</reference>
<reference key="2">
    <citation type="journal article" date="1991" name="Mol. Cell. Biol.">
        <title>Chicken vitellogenin gene-binding protein, a leucine zipper transcription factor that binds to an important control element in the chicken vitellogenin II promoter, is related to rat DBP.</title>
        <authorList>
            <person name="Iyer S.V."/>
            <person name="Davis D.L."/>
            <person name="Seal S.N."/>
            <person name="Burch J.B.E."/>
        </authorList>
    </citation>
    <scope>NUCLEOTIDE SEQUENCE [MRNA] (ISOFORM 3)</scope>
    <scope>FUNCTION</scope>
    <scope>SUBUNIT</scope>
    <scope>TISSUE SPECIFICITY</scope>
    <scope>DEVELOPMENTAL STAGE</scope>
    <scope>MUTAGENESIS OF LEU-278 AND LEU-285</scope>
    <source>
        <tissue>Liver</tissue>
    </source>
</reference>
<dbReference type="EMBL" id="U09221">
    <property type="protein sequence ID" value="AAA82156.1"/>
    <property type="molecule type" value="mRNA"/>
</dbReference>
<dbReference type="EMBL" id="U09222">
    <property type="protein sequence ID" value="AAA82157.1"/>
    <property type="molecule type" value="Genomic_DNA"/>
</dbReference>
<dbReference type="EMBL" id="U09223">
    <property type="protein sequence ID" value="AAA82158.1"/>
    <property type="molecule type" value="Genomic_DNA"/>
</dbReference>
<dbReference type="PIR" id="A41524">
    <property type="entry name" value="A41524"/>
</dbReference>
<dbReference type="PIR" id="S50109">
    <property type="entry name" value="S50109"/>
</dbReference>
<dbReference type="RefSeq" id="NP_001383919.1">
    <molecule id="Q92172-4"/>
    <property type="nucleotide sequence ID" value="NM_001396990.1"/>
</dbReference>
<dbReference type="RefSeq" id="NP_990713.1">
    <molecule id="Q92172-2"/>
    <property type="nucleotide sequence ID" value="NM_205382.2"/>
</dbReference>
<dbReference type="SMR" id="Q92172"/>
<dbReference type="FunCoup" id="Q92172">
    <property type="interactions" value="387"/>
</dbReference>
<dbReference type="STRING" id="9031.ENSGALP00000048592"/>
<dbReference type="GlyGen" id="Q92172">
    <property type="glycosylation" value="1 site"/>
</dbReference>
<dbReference type="PaxDb" id="9031-ENSGALP00000037167"/>
<dbReference type="Ensembl" id="ENSGALT00010030661.1">
    <molecule id="Q92172-2"/>
    <property type="protein sequence ID" value="ENSGALP00010017777.1"/>
    <property type="gene ID" value="ENSGALG00010012786.1"/>
</dbReference>
<dbReference type="Ensembl" id="ENSGALT00010030670.1">
    <molecule id="Q92172-4"/>
    <property type="protein sequence ID" value="ENSGALP00010017783.1"/>
    <property type="gene ID" value="ENSGALG00010012786.1"/>
</dbReference>
<dbReference type="GeneID" id="396342"/>
<dbReference type="KEGG" id="gga:396342"/>
<dbReference type="CTD" id="7008"/>
<dbReference type="VEuPathDB" id="HostDB:geneid_396342"/>
<dbReference type="eggNOG" id="KOG3119">
    <property type="taxonomic scope" value="Eukaryota"/>
</dbReference>
<dbReference type="GeneTree" id="ENSGT00940000156578"/>
<dbReference type="HOGENOM" id="CLU_051922_2_0_1"/>
<dbReference type="InParanoid" id="Q92172"/>
<dbReference type="OMA" id="LMENPRE"/>
<dbReference type="OrthoDB" id="6022300at2759"/>
<dbReference type="PhylomeDB" id="Q92172"/>
<dbReference type="TreeFam" id="TF315869"/>
<dbReference type="PRO" id="PR:Q92172"/>
<dbReference type="Proteomes" id="UP000000539">
    <property type="component" value="Chromosome 1"/>
</dbReference>
<dbReference type="Bgee" id="ENSGALG00000011958">
    <property type="expression patterns" value="Expressed in cerebellum and 13 other cell types or tissues"/>
</dbReference>
<dbReference type="GO" id="GO:0005634">
    <property type="term" value="C:nucleus"/>
    <property type="evidence" value="ECO:0000318"/>
    <property type="project" value="GO_Central"/>
</dbReference>
<dbReference type="GO" id="GO:0003677">
    <property type="term" value="F:DNA binding"/>
    <property type="evidence" value="ECO:0000314"/>
    <property type="project" value="UniProtKB"/>
</dbReference>
<dbReference type="GO" id="GO:0000981">
    <property type="term" value="F:DNA-binding transcription factor activity, RNA polymerase II-specific"/>
    <property type="evidence" value="ECO:0000318"/>
    <property type="project" value="GO_Central"/>
</dbReference>
<dbReference type="GO" id="GO:0000978">
    <property type="term" value="F:RNA polymerase II cis-regulatory region sequence-specific DNA binding"/>
    <property type="evidence" value="ECO:0000318"/>
    <property type="project" value="GO_Central"/>
</dbReference>
<dbReference type="GO" id="GO:0045893">
    <property type="term" value="P:positive regulation of DNA-templated transcription"/>
    <property type="evidence" value="ECO:0000314"/>
    <property type="project" value="UniProtKB"/>
</dbReference>
<dbReference type="GO" id="GO:0045944">
    <property type="term" value="P:positive regulation of transcription by RNA polymerase II"/>
    <property type="evidence" value="ECO:0000314"/>
    <property type="project" value="UniProtKB"/>
</dbReference>
<dbReference type="GO" id="GO:0006357">
    <property type="term" value="P:regulation of transcription by RNA polymerase II"/>
    <property type="evidence" value="ECO:0000318"/>
    <property type="project" value="GO_Central"/>
</dbReference>
<dbReference type="CDD" id="cd14695">
    <property type="entry name" value="bZIP_HLF"/>
    <property type="match status" value="1"/>
</dbReference>
<dbReference type="FunFam" id="1.20.5.170:FF:000007">
    <property type="entry name" value="hepatic leukemia factor isoform X2"/>
    <property type="match status" value="1"/>
</dbReference>
<dbReference type="Gene3D" id="1.20.5.170">
    <property type="match status" value="1"/>
</dbReference>
<dbReference type="InterPro" id="IPR004827">
    <property type="entry name" value="bZIP"/>
</dbReference>
<dbReference type="InterPro" id="IPR046347">
    <property type="entry name" value="bZIP_sf"/>
</dbReference>
<dbReference type="InterPro" id="IPR040223">
    <property type="entry name" value="PAR_bZIP"/>
</dbReference>
<dbReference type="PANTHER" id="PTHR11988:SF24">
    <property type="entry name" value="THYROTROPH EMBRYONIC FACTOR"/>
    <property type="match status" value="1"/>
</dbReference>
<dbReference type="PANTHER" id="PTHR11988">
    <property type="entry name" value="THYROTROPH EMBRYONIC FACTOR RELATED"/>
    <property type="match status" value="1"/>
</dbReference>
<dbReference type="Pfam" id="PF07716">
    <property type="entry name" value="bZIP_2"/>
    <property type="match status" value="1"/>
</dbReference>
<dbReference type="SMART" id="SM00338">
    <property type="entry name" value="BRLZ"/>
    <property type="match status" value="1"/>
</dbReference>
<dbReference type="SUPFAM" id="SSF57959">
    <property type="entry name" value="Leucine zipper domain"/>
    <property type="match status" value="1"/>
</dbReference>
<dbReference type="PROSITE" id="PS50217">
    <property type="entry name" value="BZIP"/>
    <property type="match status" value="1"/>
</dbReference>
<comment type="function">
    <text evidence="3 4">Transcription factor that binds to and transactivates the vitellogenin II (VTG2) promoter. Binds to the palindromic sequence 5'-GTTTACATAAAC-3'.</text>
</comment>
<comment type="subunit">
    <text evidence="3">Binds DNA as a homodimer or a heterodimer. Exists as a stable dimer in the absence of DNA.</text>
</comment>
<comment type="subcellular location">
    <subcellularLocation>
        <location evidence="1">Nucleus</location>
    </subcellularLocation>
</comment>
<comment type="alternative products">
    <event type="alternative promoter"/>
    <event type="alternative splicing"/>
    <isoform>
        <id>Q92172-1</id>
        <name>1</name>
        <name>Alpha/beta</name>
        <sequence type="displayed"/>
    </isoform>
    <isoform>
        <id>Q92172-2</id>
        <name>2</name>
        <name>Beta/beta</name>
        <sequence type="described" ref="VSP_051642"/>
    </isoform>
    <isoform>
        <id>Q92172-3</id>
        <name>3</name>
        <name>Alpha/alpha</name>
        <sequence type="described" ref="VSP_051643"/>
    </isoform>
    <isoform>
        <id>Q92172-4</id>
        <name>4</name>
        <name>Beta/alpha</name>
        <sequence type="described" ref="VSP_051642 VSP_051643"/>
    </isoform>
</comment>
<comment type="tissue specificity">
    <text evidence="3 4">Isoform 1 and isoform 3 are expressed in a variety of somatic tissues, including liver, heart, intestine, stomach and kidney. Both isoforms are also expressed in hepatoma (LMH) cells and in embryonic fibroblast cell lines. Isoform 2 and isoform 4 are expressed in adult heart and intestine.</text>
</comment>
<comment type="developmental stage">
    <text evidence="3">Isoform 3 is expressed as early as embryonic day 10.</text>
</comment>
<comment type="miscellaneous">
    <molecule>Isoform 1</molecule>
    <text>Produced by alternative promoter usage.</text>
</comment>
<comment type="miscellaneous">
    <molecule>Isoform 2</molecule>
    <text evidence="7">Produced by alternative promoter usage.</text>
</comment>
<comment type="miscellaneous">
    <molecule>Isoform 3</molecule>
    <text evidence="7">Produced by alternative splicing of isoform 1.</text>
</comment>
<comment type="miscellaneous">
    <molecule>Isoform 4</molecule>
    <text evidence="7">Produced by alternative splicing of isoform 2.</text>
</comment>
<comment type="similarity">
    <text evidence="7">Belongs to the bZIP family. PAR subfamily.</text>
</comment>
<protein>
    <recommendedName>
        <fullName>Transcription factor VBP</fullName>
    </recommendedName>
    <alternativeName>
        <fullName>Thyrotroph embryonic factor homolog</fullName>
    </alternativeName>
    <alternativeName>
        <fullName>Vitellogenin gene-binding protein</fullName>
    </alternativeName>
</protein>
<feature type="chain" id="PRO_0000076516" description="Transcription factor VBP">
    <location>
        <begin position="1"/>
        <end position="319"/>
    </location>
</feature>
<feature type="domain" description="bZIP" evidence="1">
    <location>
        <begin position="243"/>
        <end position="306"/>
    </location>
</feature>
<feature type="region of interest" description="Disordered" evidence="2">
    <location>
        <begin position="1"/>
        <end position="35"/>
    </location>
</feature>
<feature type="region of interest" description="Disordered" evidence="2">
    <location>
        <begin position="139"/>
        <end position="186"/>
    </location>
</feature>
<feature type="region of interest" description="Basic motif" evidence="1">
    <location>
        <begin position="245"/>
        <end position="265"/>
    </location>
</feature>
<feature type="region of interest" description="Leucine-zipper" evidence="1">
    <location>
        <begin position="266"/>
        <end position="273"/>
    </location>
</feature>
<feature type="compositionally biased region" description="Low complexity" evidence="2">
    <location>
        <begin position="1"/>
        <end position="31"/>
    </location>
</feature>
<feature type="compositionally biased region" description="Low complexity" evidence="2">
    <location>
        <begin position="143"/>
        <end position="158"/>
    </location>
</feature>
<feature type="compositionally biased region" description="Polar residues" evidence="2">
    <location>
        <begin position="159"/>
        <end position="180"/>
    </location>
</feature>
<feature type="splice variant" id="VSP_051642" description="In isoform 2 and isoform 4." evidence="6">
    <original>MPGRAAHQEAAAAGGAAAEPTAAGGSAGAVAQQPEQQGLAGAFPLVLKKLMENPPRDARL</original>
    <variation>MSVCNSAGGPAALDFPEVLKSLLEYSLPWTTKMT</variation>
    <location>
        <begin position="1"/>
        <end position="60"/>
    </location>
</feature>
<feature type="splice variant" id="VSP_051643" description="In isoform 3 and isoform 4." evidence="5">
    <original>FDLSDSE</original>
    <variation>L</variation>
    <location>
        <begin position="313"/>
        <end position="319"/>
    </location>
</feature>
<feature type="mutagenesis site" description="Complete loss of binding to VTG2 promoter in isoform 3." evidence="3">
    <original>L</original>
    <variation>V</variation>
    <location>
        <position position="278"/>
    </location>
</feature>
<feature type="mutagenesis site" description="Complete loss of binding to VTG2 promoter in isoform 3." evidence="3">
    <original>L</original>
    <variation>V</variation>
    <location>
        <position position="285"/>
    </location>
</feature>